<name>RL16_PROA2</name>
<comment type="function">
    <text evidence="1">Binds 23S rRNA and is also seen to make contacts with the A and possibly P site tRNAs.</text>
</comment>
<comment type="subunit">
    <text evidence="1">Part of the 50S ribosomal subunit.</text>
</comment>
<comment type="similarity">
    <text evidence="1">Belongs to the universal ribosomal protein uL16 family.</text>
</comment>
<evidence type="ECO:0000255" key="1">
    <source>
        <dbReference type="HAMAP-Rule" id="MF_01342"/>
    </source>
</evidence>
<evidence type="ECO:0000305" key="2"/>
<accession>B4S5C1</accession>
<proteinExistence type="inferred from homology"/>
<feature type="chain" id="PRO_1000143010" description="Large ribosomal subunit protein uL16">
    <location>
        <begin position="1"/>
        <end position="139"/>
    </location>
</feature>
<sequence>MLMPKRVKHRKVMRGKMKGNAGRGTTVTFGTYALKALEPAWITSRQIEAARVAMNRFMKRDGKIWIRIFPDKPVTKKPAETRMGSGKGNPEFWVAVVKPGRIMFEAEGVSQEVATEAFRLAAKKLPIKTKFIVRPEHEG</sequence>
<keyword id="KW-0687">Ribonucleoprotein</keyword>
<keyword id="KW-0689">Ribosomal protein</keyword>
<keyword id="KW-0694">RNA-binding</keyword>
<keyword id="KW-0699">rRNA-binding</keyword>
<keyword id="KW-0820">tRNA-binding</keyword>
<gene>
    <name evidence="1" type="primary">rplP</name>
    <name type="ordered locus">Paes_2057</name>
</gene>
<dbReference type="EMBL" id="CP001108">
    <property type="protein sequence ID" value="ACF47067.1"/>
    <property type="molecule type" value="Genomic_DNA"/>
</dbReference>
<dbReference type="RefSeq" id="WP_012506599.1">
    <property type="nucleotide sequence ID" value="NC_011059.1"/>
</dbReference>
<dbReference type="SMR" id="B4S5C1"/>
<dbReference type="STRING" id="290512.Paes_2057"/>
<dbReference type="KEGG" id="paa:Paes_2057"/>
<dbReference type="eggNOG" id="COG0197">
    <property type="taxonomic scope" value="Bacteria"/>
</dbReference>
<dbReference type="HOGENOM" id="CLU_078858_2_1_10"/>
<dbReference type="Proteomes" id="UP000002725">
    <property type="component" value="Chromosome"/>
</dbReference>
<dbReference type="GO" id="GO:0022625">
    <property type="term" value="C:cytosolic large ribosomal subunit"/>
    <property type="evidence" value="ECO:0007669"/>
    <property type="project" value="TreeGrafter"/>
</dbReference>
<dbReference type="GO" id="GO:0019843">
    <property type="term" value="F:rRNA binding"/>
    <property type="evidence" value="ECO:0007669"/>
    <property type="project" value="UniProtKB-UniRule"/>
</dbReference>
<dbReference type="GO" id="GO:0003735">
    <property type="term" value="F:structural constituent of ribosome"/>
    <property type="evidence" value="ECO:0007669"/>
    <property type="project" value="InterPro"/>
</dbReference>
<dbReference type="GO" id="GO:0000049">
    <property type="term" value="F:tRNA binding"/>
    <property type="evidence" value="ECO:0007669"/>
    <property type="project" value="UniProtKB-KW"/>
</dbReference>
<dbReference type="GO" id="GO:0006412">
    <property type="term" value="P:translation"/>
    <property type="evidence" value="ECO:0007669"/>
    <property type="project" value="UniProtKB-UniRule"/>
</dbReference>
<dbReference type="CDD" id="cd01433">
    <property type="entry name" value="Ribosomal_L16_L10e"/>
    <property type="match status" value="1"/>
</dbReference>
<dbReference type="FunFam" id="3.90.1170.10:FF:000001">
    <property type="entry name" value="50S ribosomal protein L16"/>
    <property type="match status" value="1"/>
</dbReference>
<dbReference type="Gene3D" id="3.90.1170.10">
    <property type="entry name" value="Ribosomal protein L10e/L16"/>
    <property type="match status" value="1"/>
</dbReference>
<dbReference type="HAMAP" id="MF_01342">
    <property type="entry name" value="Ribosomal_uL16"/>
    <property type="match status" value="1"/>
</dbReference>
<dbReference type="InterPro" id="IPR047873">
    <property type="entry name" value="Ribosomal_uL16"/>
</dbReference>
<dbReference type="InterPro" id="IPR000114">
    <property type="entry name" value="Ribosomal_uL16_bact-type"/>
</dbReference>
<dbReference type="InterPro" id="IPR020798">
    <property type="entry name" value="Ribosomal_uL16_CS"/>
</dbReference>
<dbReference type="InterPro" id="IPR016180">
    <property type="entry name" value="Ribosomal_uL16_dom"/>
</dbReference>
<dbReference type="InterPro" id="IPR036920">
    <property type="entry name" value="Ribosomal_uL16_sf"/>
</dbReference>
<dbReference type="NCBIfam" id="TIGR01164">
    <property type="entry name" value="rplP_bact"/>
    <property type="match status" value="1"/>
</dbReference>
<dbReference type="PANTHER" id="PTHR12220">
    <property type="entry name" value="50S/60S RIBOSOMAL PROTEIN L16"/>
    <property type="match status" value="1"/>
</dbReference>
<dbReference type="PANTHER" id="PTHR12220:SF13">
    <property type="entry name" value="LARGE RIBOSOMAL SUBUNIT PROTEIN UL16M"/>
    <property type="match status" value="1"/>
</dbReference>
<dbReference type="Pfam" id="PF00252">
    <property type="entry name" value="Ribosomal_L16"/>
    <property type="match status" value="1"/>
</dbReference>
<dbReference type="PRINTS" id="PR00060">
    <property type="entry name" value="RIBOSOMALL16"/>
</dbReference>
<dbReference type="SUPFAM" id="SSF54686">
    <property type="entry name" value="Ribosomal protein L16p/L10e"/>
    <property type="match status" value="1"/>
</dbReference>
<dbReference type="PROSITE" id="PS00586">
    <property type="entry name" value="RIBOSOMAL_L16_1"/>
    <property type="match status" value="1"/>
</dbReference>
<dbReference type="PROSITE" id="PS00701">
    <property type="entry name" value="RIBOSOMAL_L16_2"/>
    <property type="match status" value="1"/>
</dbReference>
<reference key="1">
    <citation type="submission" date="2008-06" db="EMBL/GenBank/DDBJ databases">
        <title>Complete sequence of chromosome of Prosthecochloris aestuarii DSM 271.</title>
        <authorList>
            <consortium name="US DOE Joint Genome Institute"/>
            <person name="Lucas S."/>
            <person name="Copeland A."/>
            <person name="Lapidus A."/>
            <person name="Glavina del Rio T."/>
            <person name="Dalin E."/>
            <person name="Tice H."/>
            <person name="Bruce D."/>
            <person name="Goodwin L."/>
            <person name="Pitluck S."/>
            <person name="Schmutz J."/>
            <person name="Larimer F."/>
            <person name="Land M."/>
            <person name="Hauser L."/>
            <person name="Kyrpides N."/>
            <person name="Anderson I."/>
            <person name="Liu Z."/>
            <person name="Li T."/>
            <person name="Zhao F."/>
            <person name="Overmann J."/>
            <person name="Bryant D.A."/>
            <person name="Richardson P."/>
        </authorList>
    </citation>
    <scope>NUCLEOTIDE SEQUENCE [LARGE SCALE GENOMIC DNA]</scope>
    <source>
        <strain>DSM 271 / SK 413</strain>
    </source>
</reference>
<protein>
    <recommendedName>
        <fullName evidence="1">Large ribosomal subunit protein uL16</fullName>
    </recommendedName>
    <alternativeName>
        <fullName evidence="2">50S ribosomal protein L16</fullName>
    </alternativeName>
</protein>
<organism>
    <name type="scientific">Prosthecochloris aestuarii (strain DSM 271 / SK 413)</name>
    <dbReference type="NCBI Taxonomy" id="290512"/>
    <lineage>
        <taxon>Bacteria</taxon>
        <taxon>Pseudomonadati</taxon>
        <taxon>Chlorobiota</taxon>
        <taxon>Chlorobiia</taxon>
        <taxon>Chlorobiales</taxon>
        <taxon>Chlorobiaceae</taxon>
        <taxon>Prosthecochloris</taxon>
    </lineage>
</organism>